<sequence>MQVSVEATQGLERRLTISVPAEQIEKLVKDSLQREAKRARIPGFRPGKVPVTVINKRYGAAIRQDITGEVMQRNFIEAIIAEKLNPAGAPTFIPGSTDSEKFEFVATFEIYPEVELKGLDAIEVEQPKASVTDADVDSMIETLRKQHATYAAVEREAADGDKVKMNFVGSVDGEEFEGGKAEDFELQLGSGRMIPGFEAGILGHKAGEEFVIDVNFPEEYHAENLKGKAAKFAITLTEVQAANLPEVNDEFAALFGISEGGLEALKTEIRKNMNRELEQALKANVKEQVIAGLLANNDIELPKALIDGEVNVLRQQAMQRFGGQTANMPELPAELFTEQAARRVKIGLLLGEVIKTNELKAEDERVQGLIASMASAYEDPSEVIAYYNSNKELMQNMRNVALEEQAVEALLKSAKVTEKEVAFEEFMNKATGRA</sequence>
<evidence type="ECO:0000255" key="1">
    <source>
        <dbReference type="HAMAP-Rule" id="MF_00303"/>
    </source>
</evidence>
<reference key="1">
    <citation type="submission" date="2006-12" db="EMBL/GenBank/DDBJ databases">
        <title>Complete sequence of Shewanella sp. W3-18-1.</title>
        <authorList>
            <consortium name="US DOE Joint Genome Institute"/>
            <person name="Copeland A."/>
            <person name="Lucas S."/>
            <person name="Lapidus A."/>
            <person name="Barry K."/>
            <person name="Detter J.C."/>
            <person name="Glavina del Rio T."/>
            <person name="Hammon N."/>
            <person name="Israni S."/>
            <person name="Dalin E."/>
            <person name="Tice H."/>
            <person name="Pitluck S."/>
            <person name="Chain P."/>
            <person name="Malfatti S."/>
            <person name="Shin M."/>
            <person name="Vergez L."/>
            <person name="Schmutz J."/>
            <person name="Larimer F."/>
            <person name="Land M."/>
            <person name="Hauser L."/>
            <person name="Kyrpides N."/>
            <person name="Lykidis A."/>
            <person name="Tiedje J."/>
            <person name="Richardson P."/>
        </authorList>
    </citation>
    <scope>NUCLEOTIDE SEQUENCE [LARGE SCALE GENOMIC DNA]</scope>
    <source>
        <strain>W3-18-1</strain>
    </source>
</reference>
<feature type="chain" id="PRO_1000022761" description="Trigger factor">
    <location>
        <begin position="1"/>
        <end position="434"/>
    </location>
</feature>
<feature type="domain" description="PPIase FKBP-type" evidence="1">
    <location>
        <begin position="160"/>
        <end position="245"/>
    </location>
</feature>
<gene>
    <name evidence="1" type="primary">tig</name>
    <name type="ordered locus">Sputw3181_2612</name>
</gene>
<name>TIG_SHESW</name>
<accession>A1RL90</accession>
<proteinExistence type="inferred from homology"/>
<dbReference type="EC" id="5.2.1.8" evidence="1"/>
<dbReference type="EMBL" id="CP000503">
    <property type="protein sequence ID" value="ABM25435.1"/>
    <property type="molecule type" value="Genomic_DNA"/>
</dbReference>
<dbReference type="RefSeq" id="WP_011789892.1">
    <property type="nucleotide sequence ID" value="NC_008750.1"/>
</dbReference>
<dbReference type="SMR" id="A1RL90"/>
<dbReference type="GeneID" id="67443007"/>
<dbReference type="KEGG" id="shw:Sputw3181_2612"/>
<dbReference type="HOGENOM" id="CLU_033058_2_0_6"/>
<dbReference type="Proteomes" id="UP000002597">
    <property type="component" value="Chromosome"/>
</dbReference>
<dbReference type="GO" id="GO:0005737">
    <property type="term" value="C:cytoplasm"/>
    <property type="evidence" value="ECO:0007669"/>
    <property type="project" value="UniProtKB-SubCell"/>
</dbReference>
<dbReference type="GO" id="GO:0003755">
    <property type="term" value="F:peptidyl-prolyl cis-trans isomerase activity"/>
    <property type="evidence" value="ECO:0007669"/>
    <property type="project" value="UniProtKB-UniRule"/>
</dbReference>
<dbReference type="GO" id="GO:0044183">
    <property type="term" value="F:protein folding chaperone"/>
    <property type="evidence" value="ECO:0007669"/>
    <property type="project" value="TreeGrafter"/>
</dbReference>
<dbReference type="GO" id="GO:0043022">
    <property type="term" value="F:ribosome binding"/>
    <property type="evidence" value="ECO:0007669"/>
    <property type="project" value="TreeGrafter"/>
</dbReference>
<dbReference type="GO" id="GO:0051083">
    <property type="term" value="P:'de novo' cotranslational protein folding"/>
    <property type="evidence" value="ECO:0007669"/>
    <property type="project" value="TreeGrafter"/>
</dbReference>
<dbReference type="GO" id="GO:0051301">
    <property type="term" value="P:cell division"/>
    <property type="evidence" value="ECO:0007669"/>
    <property type="project" value="UniProtKB-KW"/>
</dbReference>
<dbReference type="GO" id="GO:0061077">
    <property type="term" value="P:chaperone-mediated protein folding"/>
    <property type="evidence" value="ECO:0007669"/>
    <property type="project" value="TreeGrafter"/>
</dbReference>
<dbReference type="GO" id="GO:0015031">
    <property type="term" value="P:protein transport"/>
    <property type="evidence" value="ECO:0007669"/>
    <property type="project" value="UniProtKB-UniRule"/>
</dbReference>
<dbReference type="GO" id="GO:0043335">
    <property type="term" value="P:protein unfolding"/>
    <property type="evidence" value="ECO:0007669"/>
    <property type="project" value="TreeGrafter"/>
</dbReference>
<dbReference type="FunFam" id="3.10.50.40:FF:000001">
    <property type="entry name" value="Trigger factor"/>
    <property type="match status" value="1"/>
</dbReference>
<dbReference type="Gene3D" id="3.10.50.40">
    <property type="match status" value="1"/>
</dbReference>
<dbReference type="Gene3D" id="3.30.70.1050">
    <property type="entry name" value="Trigger factor ribosome-binding domain"/>
    <property type="match status" value="1"/>
</dbReference>
<dbReference type="Gene3D" id="1.10.3120.10">
    <property type="entry name" value="Trigger factor, C-terminal domain"/>
    <property type="match status" value="1"/>
</dbReference>
<dbReference type="HAMAP" id="MF_00303">
    <property type="entry name" value="Trigger_factor_Tig"/>
    <property type="match status" value="1"/>
</dbReference>
<dbReference type="InterPro" id="IPR046357">
    <property type="entry name" value="PPIase_dom_sf"/>
</dbReference>
<dbReference type="InterPro" id="IPR001179">
    <property type="entry name" value="PPIase_FKBP_dom"/>
</dbReference>
<dbReference type="InterPro" id="IPR005215">
    <property type="entry name" value="Trig_fac"/>
</dbReference>
<dbReference type="InterPro" id="IPR008880">
    <property type="entry name" value="Trigger_fac_C"/>
</dbReference>
<dbReference type="InterPro" id="IPR037041">
    <property type="entry name" value="Trigger_fac_C_sf"/>
</dbReference>
<dbReference type="InterPro" id="IPR008881">
    <property type="entry name" value="Trigger_fac_ribosome-bd_bac"/>
</dbReference>
<dbReference type="InterPro" id="IPR036611">
    <property type="entry name" value="Trigger_fac_ribosome-bd_sf"/>
</dbReference>
<dbReference type="InterPro" id="IPR027304">
    <property type="entry name" value="Trigger_fact/SurA_dom_sf"/>
</dbReference>
<dbReference type="NCBIfam" id="TIGR00115">
    <property type="entry name" value="tig"/>
    <property type="match status" value="1"/>
</dbReference>
<dbReference type="PANTHER" id="PTHR30560">
    <property type="entry name" value="TRIGGER FACTOR CHAPERONE AND PEPTIDYL-PROLYL CIS/TRANS ISOMERASE"/>
    <property type="match status" value="1"/>
</dbReference>
<dbReference type="PANTHER" id="PTHR30560:SF3">
    <property type="entry name" value="TRIGGER FACTOR-LIKE PROTEIN TIG, CHLOROPLASTIC"/>
    <property type="match status" value="1"/>
</dbReference>
<dbReference type="Pfam" id="PF00254">
    <property type="entry name" value="FKBP_C"/>
    <property type="match status" value="1"/>
</dbReference>
<dbReference type="Pfam" id="PF05698">
    <property type="entry name" value="Trigger_C"/>
    <property type="match status" value="1"/>
</dbReference>
<dbReference type="Pfam" id="PF05697">
    <property type="entry name" value="Trigger_N"/>
    <property type="match status" value="1"/>
</dbReference>
<dbReference type="PIRSF" id="PIRSF003095">
    <property type="entry name" value="Trigger_factor"/>
    <property type="match status" value="1"/>
</dbReference>
<dbReference type="SUPFAM" id="SSF54534">
    <property type="entry name" value="FKBP-like"/>
    <property type="match status" value="1"/>
</dbReference>
<dbReference type="SUPFAM" id="SSF109998">
    <property type="entry name" value="Triger factor/SurA peptide-binding domain-like"/>
    <property type="match status" value="1"/>
</dbReference>
<dbReference type="SUPFAM" id="SSF102735">
    <property type="entry name" value="Trigger factor ribosome-binding domain"/>
    <property type="match status" value="1"/>
</dbReference>
<dbReference type="PROSITE" id="PS50059">
    <property type="entry name" value="FKBP_PPIASE"/>
    <property type="match status" value="1"/>
</dbReference>
<protein>
    <recommendedName>
        <fullName evidence="1">Trigger factor</fullName>
        <shortName evidence="1">TF</shortName>
        <ecNumber evidence="1">5.2.1.8</ecNumber>
    </recommendedName>
    <alternativeName>
        <fullName evidence="1">PPIase</fullName>
    </alternativeName>
</protein>
<organism>
    <name type="scientific">Shewanella sp. (strain W3-18-1)</name>
    <dbReference type="NCBI Taxonomy" id="351745"/>
    <lineage>
        <taxon>Bacteria</taxon>
        <taxon>Pseudomonadati</taxon>
        <taxon>Pseudomonadota</taxon>
        <taxon>Gammaproteobacteria</taxon>
        <taxon>Alteromonadales</taxon>
        <taxon>Shewanellaceae</taxon>
        <taxon>Shewanella</taxon>
    </lineage>
</organism>
<comment type="function">
    <text evidence="1">Involved in protein export. Acts as a chaperone by maintaining the newly synthesized protein in an open conformation. Functions as a peptidyl-prolyl cis-trans isomerase.</text>
</comment>
<comment type="catalytic activity">
    <reaction evidence="1">
        <text>[protein]-peptidylproline (omega=180) = [protein]-peptidylproline (omega=0)</text>
        <dbReference type="Rhea" id="RHEA:16237"/>
        <dbReference type="Rhea" id="RHEA-COMP:10747"/>
        <dbReference type="Rhea" id="RHEA-COMP:10748"/>
        <dbReference type="ChEBI" id="CHEBI:83833"/>
        <dbReference type="ChEBI" id="CHEBI:83834"/>
        <dbReference type="EC" id="5.2.1.8"/>
    </reaction>
</comment>
<comment type="subcellular location">
    <subcellularLocation>
        <location>Cytoplasm</location>
    </subcellularLocation>
    <text evidence="1">About half TF is bound to the ribosome near the polypeptide exit tunnel while the other half is free in the cytoplasm.</text>
</comment>
<comment type="domain">
    <text evidence="1">Consists of 3 domains; the N-terminus binds the ribosome, the middle domain has PPIase activity, while the C-terminus has intrinsic chaperone activity on its own.</text>
</comment>
<comment type="similarity">
    <text evidence="1">Belongs to the FKBP-type PPIase family. Tig subfamily.</text>
</comment>
<keyword id="KW-0131">Cell cycle</keyword>
<keyword id="KW-0132">Cell division</keyword>
<keyword id="KW-0143">Chaperone</keyword>
<keyword id="KW-0963">Cytoplasm</keyword>
<keyword id="KW-0413">Isomerase</keyword>
<keyword id="KW-0697">Rotamase</keyword>